<accession>B2FQK5</accession>
<sequence length="118" mass="13329">MARIAGVNLPAQKHVWVGLQSIYGIGRTRSKKVCEVAGVASTTKIRDLSEPEIERLRAEVGKYIVEGDLRREIGIAIKRLMDLGCYRGLRHRRGLPLRGQRTRTNARTRKGPRKAIKK</sequence>
<organism>
    <name type="scientific">Stenotrophomonas maltophilia (strain K279a)</name>
    <dbReference type="NCBI Taxonomy" id="522373"/>
    <lineage>
        <taxon>Bacteria</taxon>
        <taxon>Pseudomonadati</taxon>
        <taxon>Pseudomonadota</taxon>
        <taxon>Gammaproteobacteria</taxon>
        <taxon>Lysobacterales</taxon>
        <taxon>Lysobacteraceae</taxon>
        <taxon>Stenotrophomonas</taxon>
        <taxon>Stenotrophomonas maltophilia group</taxon>
    </lineage>
</organism>
<feature type="chain" id="PRO_1000141315" description="Small ribosomal subunit protein uS13">
    <location>
        <begin position="1"/>
        <end position="118"/>
    </location>
</feature>
<feature type="region of interest" description="Disordered" evidence="2">
    <location>
        <begin position="96"/>
        <end position="118"/>
    </location>
</feature>
<gene>
    <name evidence="1" type="primary">rpsM</name>
    <name type="ordered locus">Smlt0928</name>
</gene>
<reference key="1">
    <citation type="journal article" date="2008" name="Genome Biol.">
        <title>The complete genome, comparative and functional analysis of Stenotrophomonas maltophilia reveals an organism heavily shielded by drug resistance determinants.</title>
        <authorList>
            <person name="Crossman L.C."/>
            <person name="Gould V.C."/>
            <person name="Dow J.M."/>
            <person name="Vernikos G.S."/>
            <person name="Okazaki A."/>
            <person name="Sebaihia M."/>
            <person name="Saunders D."/>
            <person name="Arrowsmith C."/>
            <person name="Carver T."/>
            <person name="Peters N."/>
            <person name="Adlem E."/>
            <person name="Kerhornou A."/>
            <person name="Lord A."/>
            <person name="Murphy L."/>
            <person name="Seeger K."/>
            <person name="Squares R."/>
            <person name="Rutter S."/>
            <person name="Quail M.A."/>
            <person name="Rajandream M.A."/>
            <person name="Harris D."/>
            <person name="Churcher C."/>
            <person name="Bentley S.D."/>
            <person name="Parkhill J."/>
            <person name="Thomson N.R."/>
            <person name="Avison M.B."/>
        </authorList>
    </citation>
    <scope>NUCLEOTIDE SEQUENCE [LARGE SCALE GENOMIC DNA]</scope>
    <source>
        <strain>K279a</strain>
    </source>
</reference>
<evidence type="ECO:0000255" key="1">
    <source>
        <dbReference type="HAMAP-Rule" id="MF_01315"/>
    </source>
</evidence>
<evidence type="ECO:0000256" key="2">
    <source>
        <dbReference type="SAM" id="MobiDB-lite"/>
    </source>
</evidence>
<evidence type="ECO:0000305" key="3"/>
<keyword id="KW-1185">Reference proteome</keyword>
<keyword id="KW-0687">Ribonucleoprotein</keyword>
<keyword id="KW-0689">Ribosomal protein</keyword>
<keyword id="KW-0694">RNA-binding</keyword>
<keyword id="KW-0699">rRNA-binding</keyword>
<keyword id="KW-0820">tRNA-binding</keyword>
<name>RS13_STRMK</name>
<proteinExistence type="inferred from homology"/>
<comment type="function">
    <text evidence="1">Located at the top of the head of the 30S subunit, it contacts several helices of the 16S rRNA. In the 70S ribosome it contacts the 23S rRNA (bridge B1a) and protein L5 of the 50S subunit (bridge B1b), connecting the 2 subunits; these bridges are implicated in subunit movement. Contacts the tRNAs in the A and P-sites.</text>
</comment>
<comment type="subunit">
    <text evidence="1">Part of the 30S ribosomal subunit. Forms a loose heterodimer with protein S19. Forms two bridges to the 50S subunit in the 70S ribosome.</text>
</comment>
<comment type="similarity">
    <text evidence="1">Belongs to the universal ribosomal protein uS13 family.</text>
</comment>
<protein>
    <recommendedName>
        <fullName evidence="1">Small ribosomal subunit protein uS13</fullName>
    </recommendedName>
    <alternativeName>
        <fullName evidence="3">30S ribosomal protein S13</fullName>
    </alternativeName>
</protein>
<dbReference type="EMBL" id="AM743169">
    <property type="protein sequence ID" value="CAQ44496.1"/>
    <property type="molecule type" value="Genomic_DNA"/>
</dbReference>
<dbReference type="RefSeq" id="WP_004154500.1">
    <property type="nucleotide sequence ID" value="NC_010943.1"/>
</dbReference>
<dbReference type="SMR" id="B2FQK5"/>
<dbReference type="EnsemblBacteria" id="CAQ44496">
    <property type="protein sequence ID" value="CAQ44496"/>
    <property type="gene ID" value="Smlt0928"/>
</dbReference>
<dbReference type="GeneID" id="97259955"/>
<dbReference type="KEGG" id="sml:Smlt0928"/>
<dbReference type="eggNOG" id="COG0099">
    <property type="taxonomic scope" value="Bacteria"/>
</dbReference>
<dbReference type="HOGENOM" id="CLU_103849_1_2_6"/>
<dbReference type="Proteomes" id="UP000008840">
    <property type="component" value="Chromosome"/>
</dbReference>
<dbReference type="GO" id="GO:0005829">
    <property type="term" value="C:cytosol"/>
    <property type="evidence" value="ECO:0007669"/>
    <property type="project" value="TreeGrafter"/>
</dbReference>
<dbReference type="GO" id="GO:0015935">
    <property type="term" value="C:small ribosomal subunit"/>
    <property type="evidence" value="ECO:0007669"/>
    <property type="project" value="TreeGrafter"/>
</dbReference>
<dbReference type="GO" id="GO:0019843">
    <property type="term" value="F:rRNA binding"/>
    <property type="evidence" value="ECO:0007669"/>
    <property type="project" value="UniProtKB-UniRule"/>
</dbReference>
<dbReference type="GO" id="GO:0003735">
    <property type="term" value="F:structural constituent of ribosome"/>
    <property type="evidence" value="ECO:0007669"/>
    <property type="project" value="InterPro"/>
</dbReference>
<dbReference type="GO" id="GO:0000049">
    <property type="term" value="F:tRNA binding"/>
    <property type="evidence" value="ECO:0007669"/>
    <property type="project" value="UniProtKB-UniRule"/>
</dbReference>
<dbReference type="GO" id="GO:0006412">
    <property type="term" value="P:translation"/>
    <property type="evidence" value="ECO:0007669"/>
    <property type="project" value="UniProtKB-UniRule"/>
</dbReference>
<dbReference type="FunFam" id="1.10.8.50:FF:000001">
    <property type="entry name" value="30S ribosomal protein S13"/>
    <property type="match status" value="1"/>
</dbReference>
<dbReference type="FunFam" id="4.10.910.10:FF:000001">
    <property type="entry name" value="30S ribosomal protein S13"/>
    <property type="match status" value="1"/>
</dbReference>
<dbReference type="Gene3D" id="1.10.8.50">
    <property type="match status" value="1"/>
</dbReference>
<dbReference type="Gene3D" id="4.10.910.10">
    <property type="entry name" value="30s ribosomal protein s13, domain 2"/>
    <property type="match status" value="1"/>
</dbReference>
<dbReference type="HAMAP" id="MF_01315">
    <property type="entry name" value="Ribosomal_uS13"/>
    <property type="match status" value="1"/>
</dbReference>
<dbReference type="InterPro" id="IPR027437">
    <property type="entry name" value="Rbsml_uS13_C"/>
</dbReference>
<dbReference type="InterPro" id="IPR001892">
    <property type="entry name" value="Ribosomal_uS13"/>
</dbReference>
<dbReference type="InterPro" id="IPR010979">
    <property type="entry name" value="Ribosomal_uS13-like_H2TH"/>
</dbReference>
<dbReference type="InterPro" id="IPR019980">
    <property type="entry name" value="Ribosomal_uS13_bac-type"/>
</dbReference>
<dbReference type="InterPro" id="IPR018269">
    <property type="entry name" value="Ribosomal_uS13_CS"/>
</dbReference>
<dbReference type="NCBIfam" id="TIGR03631">
    <property type="entry name" value="uS13_bact"/>
    <property type="match status" value="1"/>
</dbReference>
<dbReference type="PANTHER" id="PTHR10871">
    <property type="entry name" value="30S RIBOSOMAL PROTEIN S13/40S RIBOSOMAL PROTEIN S18"/>
    <property type="match status" value="1"/>
</dbReference>
<dbReference type="PANTHER" id="PTHR10871:SF1">
    <property type="entry name" value="SMALL RIBOSOMAL SUBUNIT PROTEIN US13M"/>
    <property type="match status" value="1"/>
</dbReference>
<dbReference type="Pfam" id="PF00416">
    <property type="entry name" value="Ribosomal_S13"/>
    <property type="match status" value="1"/>
</dbReference>
<dbReference type="PIRSF" id="PIRSF002134">
    <property type="entry name" value="Ribosomal_S13"/>
    <property type="match status" value="1"/>
</dbReference>
<dbReference type="SUPFAM" id="SSF46946">
    <property type="entry name" value="S13-like H2TH domain"/>
    <property type="match status" value="1"/>
</dbReference>
<dbReference type="PROSITE" id="PS00646">
    <property type="entry name" value="RIBOSOMAL_S13_1"/>
    <property type="match status" value="1"/>
</dbReference>
<dbReference type="PROSITE" id="PS50159">
    <property type="entry name" value="RIBOSOMAL_S13_2"/>
    <property type="match status" value="1"/>
</dbReference>